<organism>
    <name type="scientific">Saccharophagus degradans (strain 2-40 / ATCC 43961 / DSM 17024)</name>
    <dbReference type="NCBI Taxonomy" id="203122"/>
    <lineage>
        <taxon>Bacteria</taxon>
        <taxon>Pseudomonadati</taxon>
        <taxon>Pseudomonadota</taxon>
        <taxon>Gammaproteobacteria</taxon>
        <taxon>Cellvibrionales</taxon>
        <taxon>Cellvibrionaceae</taxon>
        <taxon>Saccharophagus</taxon>
    </lineage>
</organism>
<proteinExistence type="inferred from homology"/>
<sequence length="239" mass="25680">MQRPSGRAPEQLRDVTITRQFTRHAEGSVLVCFGDTKVICTASVEAGVPRFLKGQGQGWITAEYGMLPRSTGSRMGREAARGKQGGRTVEIQRLIGRSLRAAVDLTALGEHSIVIDCDVIQADGGTRTASITGALVALVDAIRYLQREKMITTDPLVHMVAAVSVGIYEGVPVLDLDYPEDSNAETDMNMVMTEEGGLIEIQGTAEKKPFTDEQFAGMFSLAKKGVAELVALQKAALAQ</sequence>
<protein>
    <recommendedName>
        <fullName evidence="1">Ribonuclease PH</fullName>
        <shortName evidence="1">RNase PH</shortName>
        <ecNumber evidence="1">2.7.7.56</ecNumber>
    </recommendedName>
    <alternativeName>
        <fullName evidence="1">tRNA nucleotidyltransferase</fullName>
    </alternativeName>
</protein>
<accession>Q21EE1</accession>
<reference key="1">
    <citation type="journal article" date="2008" name="PLoS Genet.">
        <title>Complete genome sequence of the complex carbohydrate-degrading marine bacterium, Saccharophagus degradans strain 2-40 T.</title>
        <authorList>
            <person name="Weiner R.M."/>
            <person name="Taylor L.E. II"/>
            <person name="Henrissat B."/>
            <person name="Hauser L."/>
            <person name="Land M."/>
            <person name="Coutinho P.M."/>
            <person name="Rancurel C."/>
            <person name="Saunders E.H."/>
            <person name="Longmire A.G."/>
            <person name="Zhang H."/>
            <person name="Bayer E.A."/>
            <person name="Gilbert H.J."/>
            <person name="Larimer F."/>
            <person name="Zhulin I.B."/>
            <person name="Ekborg N.A."/>
            <person name="Lamed R."/>
            <person name="Richardson P.M."/>
            <person name="Borovok I."/>
            <person name="Hutcheson S."/>
        </authorList>
    </citation>
    <scope>NUCLEOTIDE SEQUENCE [LARGE SCALE GENOMIC DNA]</scope>
    <source>
        <strain>2-40 / ATCC 43961 / DSM 17024</strain>
    </source>
</reference>
<evidence type="ECO:0000255" key="1">
    <source>
        <dbReference type="HAMAP-Rule" id="MF_00564"/>
    </source>
</evidence>
<name>RNPH_SACD2</name>
<comment type="function">
    <text evidence="1">Phosphorolytic 3'-5' exoribonuclease that plays an important role in tRNA 3'-end maturation. Removes nucleotide residues following the 3'-CCA terminus of tRNAs; can also add nucleotides to the ends of RNA molecules by using nucleoside diphosphates as substrates, but this may not be physiologically important. Probably plays a role in initiation of 16S rRNA degradation (leading to ribosome degradation) during starvation.</text>
</comment>
<comment type="catalytic activity">
    <reaction evidence="1">
        <text>tRNA(n+1) + phosphate = tRNA(n) + a ribonucleoside 5'-diphosphate</text>
        <dbReference type="Rhea" id="RHEA:10628"/>
        <dbReference type="Rhea" id="RHEA-COMP:17343"/>
        <dbReference type="Rhea" id="RHEA-COMP:17344"/>
        <dbReference type="ChEBI" id="CHEBI:43474"/>
        <dbReference type="ChEBI" id="CHEBI:57930"/>
        <dbReference type="ChEBI" id="CHEBI:173114"/>
        <dbReference type="EC" id="2.7.7.56"/>
    </reaction>
</comment>
<comment type="subunit">
    <text evidence="1">Homohexameric ring arranged as a trimer of dimers.</text>
</comment>
<comment type="similarity">
    <text evidence="1">Belongs to the RNase PH family.</text>
</comment>
<dbReference type="EC" id="2.7.7.56" evidence="1"/>
<dbReference type="EMBL" id="CP000282">
    <property type="protein sequence ID" value="ABD82938.1"/>
    <property type="molecule type" value="Genomic_DNA"/>
</dbReference>
<dbReference type="RefSeq" id="WP_011470153.1">
    <property type="nucleotide sequence ID" value="NC_007912.1"/>
</dbReference>
<dbReference type="SMR" id="Q21EE1"/>
<dbReference type="STRING" id="203122.Sde_3683"/>
<dbReference type="GeneID" id="98615293"/>
<dbReference type="KEGG" id="sde:Sde_3683"/>
<dbReference type="eggNOG" id="COG0689">
    <property type="taxonomic scope" value="Bacteria"/>
</dbReference>
<dbReference type="HOGENOM" id="CLU_050858_0_0_6"/>
<dbReference type="OrthoDB" id="9802265at2"/>
<dbReference type="Proteomes" id="UP000001947">
    <property type="component" value="Chromosome"/>
</dbReference>
<dbReference type="GO" id="GO:0000175">
    <property type="term" value="F:3'-5'-RNA exonuclease activity"/>
    <property type="evidence" value="ECO:0007669"/>
    <property type="project" value="UniProtKB-UniRule"/>
</dbReference>
<dbReference type="GO" id="GO:0000049">
    <property type="term" value="F:tRNA binding"/>
    <property type="evidence" value="ECO:0007669"/>
    <property type="project" value="UniProtKB-UniRule"/>
</dbReference>
<dbReference type="GO" id="GO:0009022">
    <property type="term" value="F:tRNA nucleotidyltransferase activity"/>
    <property type="evidence" value="ECO:0007669"/>
    <property type="project" value="UniProtKB-UniRule"/>
</dbReference>
<dbReference type="GO" id="GO:0016075">
    <property type="term" value="P:rRNA catabolic process"/>
    <property type="evidence" value="ECO:0007669"/>
    <property type="project" value="UniProtKB-UniRule"/>
</dbReference>
<dbReference type="GO" id="GO:0006364">
    <property type="term" value="P:rRNA processing"/>
    <property type="evidence" value="ECO:0007669"/>
    <property type="project" value="UniProtKB-KW"/>
</dbReference>
<dbReference type="GO" id="GO:0008033">
    <property type="term" value="P:tRNA processing"/>
    <property type="evidence" value="ECO:0007669"/>
    <property type="project" value="UniProtKB-UniRule"/>
</dbReference>
<dbReference type="CDD" id="cd11362">
    <property type="entry name" value="RNase_PH_bact"/>
    <property type="match status" value="1"/>
</dbReference>
<dbReference type="FunFam" id="3.30.230.70:FF:000003">
    <property type="entry name" value="Ribonuclease PH"/>
    <property type="match status" value="1"/>
</dbReference>
<dbReference type="Gene3D" id="3.30.230.70">
    <property type="entry name" value="GHMP Kinase, N-terminal domain"/>
    <property type="match status" value="1"/>
</dbReference>
<dbReference type="HAMAP" id="MF_00564">
    <property type="entry name" value="RNase_PH"/>
    <property type="match status" value="1"/>
</dbReference>
<dbReference type="InterPro" id="IPR001247">
    <property type="entry name" value="ExoRNase_PH_dom1"/>
</dbReference>
<dbReference type="InterPro" id="IPR015847">
    <property type="entry name" value="ExoRNase_PH_dom2"/>
</dbReference>
<dbReference type="InterPro" id="IPR036345">
    <property type="entry name" value="ExoRNase_PH_dom2_sf"/>
</dbReference>
<dbReference type="InterPro" id="IPR027408">
    <property type="entry name" value="PNPase/RNase_PH_dom_sf"/>
</dbReference>
<dbReference type="InterPro" id="IPR020568">
    <property type="entry name" value="Ribosomal_Su5_D2-typ_SF"/>
</dbReference>
<dbReference type="InterPro" id="IPR050080">
    <property type="entry name" value="RNase_PH"/>
</dbReference>
<dbReference type="InterPro" id="IPR002381">
    <property type="entry name" value="RNase_PH_bac-type"/>
</dbReference>
<dbReference type="InterPro" id="IPR018336">
    <property type="entry name" value="RNase_PH_CS"/>
</dbReference>
<dbReference type="NCBIfam" id="TIGR01966">
    <property type="entry name" value="RNasePH"/>
    <property type="match status" value="1"/>
</dbReference>
<dbReference type="PANTHER" id="PTHR11953">
    <property type="entry name" value="EXOSOME COMPLEX COMPONENT"/>
    <property type="match status" value="1"/>
</dbReference>
<dbReference type="PANTHER" id="PTHR11953:SF0">
    <property type="entry name" value="EXOSOME COMPLEX COMPONENT RRP41"/>
    <property type="match status" value="1"/>
</dbReference>
<dbReference type="Pfam" id="PF01138">
    <property type="entry name" value="RNase_PH"/>
    <property type="match status" value="1"/>
</dbReference>
<dbReference type="Pfam" id="PF03725">
    <property type="entry name" value="RNase_PH_C"/>
    <property type="match status" value="1"/>
</dbReference>
<dbReference type="SUPFAM" id="SSF55666">
    <property type="entry name" value="Ribonuclease PH domain 2-like"/>
    <property type="match status" value="1"/>
</dbReference>
<dbReference type="SUPFAM" id="SSF54211">
    <property type="entry name" value="Ribosomal protein S5 domain 2-like"/>
    <property type="match status" value="1"/>
</dbReference>
<dbReference type="PROSITE" id="PS01277">
    <property type="entry name" value="RIBONUCLEASE_PH"/>
    <property type="match status" value="1"/>
</dbReference>
<gene>
    <name evidence="1" type="primary">rph</name>
    <name type="ordered locus">Sde_3683</name>
</gene>
<keyword id="KW-0548">Nucleotidyltransferase</keyword>
<keyword id="KW-1185">Reference proteome</keyword>
<keyword id="KW-0694">RNA-binding</keyword>
<keyword id="KW-0698">rRNA processing</keyword>
<keyword id="KW-0808">Transferase</keyword>
<keyword id="KW-0819">tRNA processing</keyword>
<keyword id="KW-0820">tRNA-binding</keyword>
<feature type="chain" id="PRO_1000024874" description="Ribonuclease PH">
    <location>
        <begin position="1"/>
        <end position="239"/>
    </location>
</feature>
<feature type="binding site" evidence="1">
    <location>
        <position position="87"/>
    </location>
    <ligand>
        <name>phosphate</name>
        <dbReference type="ChEBI" id="CHEBI:43474"/>
        <note>substrate</note>
    </ligand>
</feature>
<feature type="binding site" evidence="1">
    <location>
        <begin position="125"/>
        <end position="127"/>
    </location>
    <ligand>
        <name>phosphate</name>
        <dbReference type="ChEBI" id="CHEBI:43474"/>
        <note>substrate</note>
    </ligand>
</feature>